<dbReference type="SMR" id="P86743"/>
<dbReference type="iPTMnet" id="P86743"/>
<dbReference type="GO" id="GO:0005737">
    <property type="term" value="C:cytoplasm"/>
    <property type="evidence" value="ECO:0007669"/>
    <property type="project" value="TreeGrafter"/>
</dbReference>
<dbReference type="GO" id="GO:0005509">
    <property type="term" value="F:calcium ion binding"/>
    <property type="evidence" value="ECO:0007669"/>
    <property type="project" value="InterPro"/>
</dbReference>
<dbReference type="FunFam" id="1.10.238.10:FF:000060">
    <property type="entry name" value="Parvalbumin, thymic"/>
    <property type="match status" value="1"/>
</dbReference>
<dbReference type="Gene3D" id="1.10.238.10">
    <property type="entry name" value="EF-hand"/>
    <property type="match status" value="1"/>
</dbReference>
<dbReference type="InterPro" id="IPR011992">
    <property type="entry name" value="EF-hand-dom_pair"/>
</dbReference>
<dbReference type="InterPro" id="IPR018247">
    <property type="entry name" value="EF_Hand_1_Ca_BS"/>
</dbReference>
<dbReference type="InterPro" id="IPR002048">
    <property type="entry name" value="EF_hand_dom"/>
</dbReference>
<dbReference type="InterPro" id="IPR008080">
    <property type="entry name" value="Parvalbumin"/>
</dbReference>
<dbReference type="PANTHER" id="PTHR11653:SF12">
    <property type="entry name" value="PARVALBUMIN"/>
    <property type="match status" value="1"/>
</dbReference>
<dbReference type="PANTHER" id="PTHR11653">
    <property type="entry name" value="PARVALBUMIN ALPHA"/>
    <property type="match status" value="1"/>
</dbReference>
<dbReference type="Pfam" id="PF13499">
    <property type="entry name" value="EF-hand_7"/>
    <property type="match status" value="1"/>
</dbReference>
<dbReference type="PRINTS" id="PR01697">
    <property type="entry name" value="PARVALBUMIN"/>
</dbReference>
<dbReference type="SMART" id="SM00054">
    <property type="entry name" value="EFh"/>
    <property type="match status" value="2"/>
</dbReference>
<dbReference type="SUPFAM" id="SSF47473">
    <property type="entry name" value="EF-hand"/>
    <property type="match status" value="1"/>
</dbReference>
<dbReference type="PROSITE" id="PS00018">
    <property type="entry name" value="EF_HAND_1"/>
    <property type="match status" value="2"/>
</dbReference>
<dbReference type="PROSITE" id="PS50222">
    <property type="entry name" value="EF_HAND_2"/>
    <property type="match status" value="2"/>
</dbReference>
<protein>
    <recommendedName>
        <fullName evidence="7">Parvalbumin beta 2</fullName>
    </recommendedName>
</protein>
<name>PRVB2_MACNO</name>
<organism>
    <name type="scientific">Macruronus novaezelandiae</name>
    <name type="common">Blue grenadier</name>
    <name type="synonym">Macruronus novaezelandiae novaezelandiae</name>
    <dbReference type="NCBI Taxonomy" id="248764"/>
    <lineage>
        <taxon>Eukaryota</taxon>
        <taxon>Metazoa</taxon>
        <taxon>Chordata</taxon>
        <taxon>Craniata</taxon>
        <taxon>Vertebrata</taxon>
        <taxon>Euteleostomi</taxon>
        <taxon>Actinopterygii</taxon>
        <taxon>Neopterygii</taxon>
        <taxon>Teleostei</taxon>
        <taxon>Neoteleostei</taxon>
        <taxon>Acanthomorphata</taxon>
        <taxon>Zeiogadaria</taxon>
        <taxon>Gadariae</taxon>
        <taxon>Gadiformes</taxon>
        <taxon>Gadoidei</taxon>
        <taxon>Merlucciidae</taxon>
        <taxon>Macruronus</taxon>
    </lineage>
</organism>
<reference evidence="8" key="1">
    <citation type="journal article" date="2010" name="J. Proteome Res.">
        <title>Extensive de novo sequencing of new parvalbumin isoforms using a novel combination of bottom-up proteomics, accurate molecular mass measurement by FTICR-MS, and selected MS/MS ion monitoring.</title>
        <authorList>
            <person name="Carrera M."/>
            <person name="Canas B."/>
            <person name="Vazquez J."/>
            <person name="Gallardo J.M."/>
        </authorList>
    </citation>
    <scope>PROTEIN SEQUENCE</scope>
    <scope>MASS SPECTROMETRY</scope>
    <scope>ACETYLATION AT ALA-1</scope>
    <source>
        <tissue evidence="6">Muscle</tissue>
    </source>
</reference>
<sequence>AFAGILADADCAAALKACEAADSFNYKAFFAKVGLASKSAEEIKKAFFVIDQDKSGFIEEDELKLFLQNFVAGARALTDAETKAFLKAGDSDGDGAIGVDEFAALVKA</sequence>
<accession>P86743</accession>
<proteinExistence type="evidence at protein level"/>
<keyword id="KW-0007">Acetylation</keyword>
<keyword id="KW-0020">Allergen</keyword>
<keyword id="KW-0106">Calcium</keyword>
<keyword id="KW-0903">Direct protein sequencing</keyword>
<keyword id="KW-0479">Metal-binding</keyword>
<keyword id="KW-0514">Muscle protein</keyword>
<keyword id="KW-0677">Repeat</keyword>
<feature type="chain" id="PRO_0000399403" description="Parvalbumin beta 2">
    <location>
        <begin position="1"/>
        <end position="108"/>
    </location>
</feature>
<feature type="domain" description="EF-hand 1" evidence="5">
    <location>
        <begin position="38"/>
        <end position="73"/>
    </location>
</feature>
<feature type="domain" description="EF-hand 2" evidence="5">
    <location>
        <begin position="77"/>
        <end position="108"/>
    </location>
</feature>
<feature type="binding site" evidence="5">
    <location>
        <position position="51"/>
    </location>
    <ligand>
        <name>Ca(2+)</name>
        <dbReference type="ChEBI" id="CHEBI:29108"/>
        <label>1</label>
    </ligand>
</feature>
<feature type="binding site" evidence="5">
    <location>
        <position position="53"/>
    </location>
    <ligand>
        <name>Ca(2+)</name>
        <dbReference type="ChEBI" id="CHEBI:29108"/>
        <label>1</label>
    </ligand>
</feature>
<feature type="binding site" evidence="5">
    <location>
        <position position="55"/>
    </location>
    <ligand>
        <name>Ca(2+)</name>
        <dbReference type="ChEBI" id="CHEBI:29108"/>
        <label>1</label>
    </ligand>
</feature>
<feature type="binding site" evidence="1">
    <location>
        <position position="57"/>
    </location>
    <ligand>
        <name>Ca(2+)</name>
        <dbReference type="ChEBI" id="CHEBI:29108"/>
        <label>1</label>
    </ligand>
</feature>
<feature type="binding site" evidence="1">
    <location>
        <position position="59"/>
    </location>
    <ligand>
        <name>Ca(2+)</name>
        <dbReference type="ChEBI" id="CHEBI:29108"/>
        <label>1</label>
    </ligand>
</feature>
<feature type="binding site" evidence="5">
    <location>
        <position position="62"/>
    </location>
    <ligand>
        <name>Ca(2+)</name>
        <dbReference type="ChEBI" id="CHEBI:29108"/>
        <label>1</label>
    </ligand>
</feature>
<feature type="binding site" evidence="5">
    <location>
        <position position="90"/>
    </location>
    <ligand>
        <name>Ca(2+)</name>
        <dbReference type="ChEBI" id="CHEBI:29108"/>
        <label>2</label>
    </ligand>
</feature>
<feature type="binding site" evidence="5">
    <location>
        <position position="92"/>
    </location>
    <ligand>
        <name>Ca(2+)</name>
        <dbReference type="ChEBI" id="CHEBI:29108"/>
        <label>2</label>
    </ligand>
</feature>
<feature type="binding site" evidence="5">
    <location>
        <position position="94"/>
    </location>
    <ligand>
        <name>Ca(2+)</name>
        <dbReference type="ChEBI" id="CHEBI:29108"/>
        <label>2</label>
    </ligand>
</feature>
<feature type="binding site" evidence="1">
    <location>
        <position position="96"/>
    </location>
    <ligand>
        <name>Ca(2+)</name>
        <dbReference type="ChEBI" id="CHEBI:29108"/>
        <label>2</label>
    </ligand>
</feature>
<feature type="binding site" evidence="5">
    <location>
        <position position="101"/>
    </location>
    <ligand>
        <name>Ca(2+)</name>
        <dbReference type="ChEBI" id="CHEBI:29108"/>
        <label>2</label>
    </ligand>
</feature>
<feature type="modified residue" description="N-acetylalanine" evidence="6">
    <location>
        <position position="1"/>
    </location>
</feature>
<feature type="unsure residue" description="I or L" evidence="6">
    <location>
        <position position="5"/>
    </location>
</feature>
<feature type="unsure residue" description="L or I" evidence="6">
    <location>
        <position position="6"/>
    </location>
</feature>
<feature type="unsure residue" description="L or I" evidence="6">
    <location>
        <position position="15"/>
    </location>
</feature>
<feature type="unsure residue" description="K or Q" evidence="6">
    <location>
        <position position="16"/>
    </location>
</feature>
<feature type="unsure residue" description="K or Q" evidence="6">
    <location>
        <position position="27"/>
    </location>
</feature>
<feature type="unsure residue" description="K or Q" evidence="6">
    <location>
        <position position="32"/>
    </location>
</feature>
<feature type="unsure residue" description="L or I" evidence="6">
    <location>
        <position position="35"/>
    </location>
</feature>
<feature type="unsure residue" description="K or Q" evidence="6">
    <location>
        <position position="38"/>
    </location>
</feature>
<feature type="unsure residue" description="I or L" evidence="6">
    <location>
        <position position="43"/>
    </location>
</feature>
<feature type="unsure residue" description="K or Q" evidence="6">
    <location>
        <position position="44"/>
    </location>
</feature>
<feature type="unsure residue" description="K or Q" evidence="6">
    <location>
        <position position="45"/>
    </location>
</feature>
<feature type="unsure residue" description="I or L" evidence="6">
    <location>
        <position position="50"/>
    </location>
</feature>
<feature type="unsure residue" description="Q or K" evidence="6">
    <location>
        <position position="52"/>
    </location>
</feature>
<feature type="unsure residue" description="K or Q" evidence="6">
    <location>
        <position position="54"/>
    </location>
</feature>
<feature type="unsure residue" description="I or L" evidence="6">
    <location>
        <position position="58"/>
    </location>
</feature>
<feature type="unsure residue" description="L or I" evidence="6">
    <location>
        <position position="63"/>
    </location>
</feature>
<feature type="unsure residue" description="K or Q" evidence="6">
    <location>
        <position position="64"/>
    </location>
</feature>
<feature type="unsure residue" description="L or I" evidence="6">
    <location>
        <position position="65"/>
    </location>
</feature>
<feature type="unsure residue" description="L or I" evidence="6">
    <location>
        <position position="67"/>
    </location>
</feature>
<feature type="unsure residue" description="Q or K" evidence="6">
    <location>
        <position position="68"/>
    </location>
</feature>
<feature type="unsure residue" description="L or I" evidence="6">
    <location>
        <position position="77"/>
    </location>
</feature>
<feature type="unsure residue" description="K or Q" evidence="6">
    <location>
        <position position="83"/>
    </location>
</feature>
<feature type="unsure residue" description="L or I" evidence="6">
    <location>
        <position position="86"/>
    </location>
</feature>
<feature type="unsure residue" description="K or Q" evidence="6">
    <location>
        <position position="87"/>
    </location>
</feature>
<feature type="unsure residue" description="I or L" evidence="6">
    <location>
        <position position="97"/>
    </location>
</feature>
<feature type="unsure residue" description="L or I" evidence="6">
    <location>
        <position position="105"/>
    </location>
</feature>
<feature type="unsure residue" description="K or Q" evidence="6">
    <location>
        <position position="107"/>
    </location>
</feature>
<comment type="function">
    <text evidence="2 3">In muscle, parvalbumin is thought to be involved in relaxation after contraction. It binds two calcium ions (By similarity).</text>
</comment>
<comment type="mass spectrometry"/>
<comment type="miscellaneous">
    <text evidence="2 6">Is regarded as an important allergen.</text>
</comment>
<comment type="miscellaneous">
    <text evidence="6">On the 2D-gel the determined pI of this protein is: 4.05, its MW is: 11.35 kDa.</text>
</comment>
<comment type="similarity">
    <text evidence="4">Belongs to the parvalbumin family.</text>
</comment>
<evidence type="ECO:0000250" key="1">
    <source>
        <dbReference type="UniProtKB" id="P02621"/>
    </source>
</evidence>
<evidence type="ECO:0000250" key="2">
    <source>
        <dbReference type="UniProtKB" id="P02622"/>
    </source>
</evidence>
<evidence type="ECO:0000250" key="3">
    <source>
        <dbReference type="UniProtKB" id="P02624"/>
    </source>
</evidence>
<evidence type="ECO:0000255" key="4"/>
<evidence type="ECO:0000255" key="5">
    <source>
        <dbReference type="PROSITE-ProRule" id="PRU00448"/>
    </source>
</evidence>
<evidence type="ECO:0000269" key="6">
    <source>
    </source>
</evidence>
<evidence type="ECO:0000303" key="7">
    <source>
    </source>
</evidence>
<evidence type="ECO:0000305" key="8"/>